<comment type="function">
    <text evidence="1">Part of ribonuclease P, a protein complex that generates mature tRNA molecules by cleaving their 5'-ends.</text>
</comment>
<comment type="catalytic activity">
    <reaction evidence="1">
        <text>Endonucleolytic cleavage of RNA, removing 5'-extranucleotides from tRNA precursor.</text>
        <dbReference type="EC" id="3.1.26.5"/>
    </reaction>
</comment>
<comment type="subunit">
    <text evidence="1">Consists of a catalytic RNA component and at least 4-5 protein subunits.</text>
</comment>
<comment type="subcellular location">
    <subcellularLocation>
        <location evidence="1">Cytoplasm</location>
    </subcellularLocation>
</comment>
<comment type="similarity">
    <text evidence="1">Belongs to the eukaryotic/archaeal RNase P protein component 3 family.</text>
</comment>
<name>RNP3_HALS3</name>
<accession>B0R596</accession>
<keyword id="KW-0963">Cytoplasm</keyword>
<keyword id="KW-0255">Endonuclease</keyword>
<keyword id="KW-0378">Hydrolase</keyword>
<keyword id="KW-0540">Nuclease</keyword>
<keyword id="KW-0819">tRNA processing</keyword>
<proteinExistence type="inferred from homology"/>
<gene>
    <name evidence="1" type="primary">rnp3</name>
    <name type="ordered locus">OE_2834R</name>
</gene>
<organism>
    <name type="scientific">Halobacterium salinarum (strain ATCC 29341 / DSM 671 / R1)</name>
    <dbReference type="NCBI Taxonomy" id="478009"/>
    <lineage>
        <taxon>Archaea</taxon>
        <taxon>Methanobacteriati</taxon>
        <taxon>Methanobacteriota</taxon>
        <taxon>Stenosarchaea group</taxon>
        <taxon>Halobacteria</taxon>
        <taxon>Halobacteriales</taxon>
        <taxon>Halobacteriaceae</taxon>
        <taxon>Halobacterium</taxon>
        <taxon>Halobacterium salinarum NRC-34001</taxon>
    </lineage>
</organism>
<protein>
    <recommendedName>
        <fullName evidence="1">Ribonuclease P protein component 3</fullName>
        <shortName evidence="1">RNase P component 3</shortName>
        <ecNumber evidence="1">3.1.26.5</ecNumber>
    </recommendedName>
    <alternativeName>
        <fullName evidence="1">Rpp30</fullName>
    </alternativeName>
</protein>
<feature type="chain" id="PRO_1000194590" description="Ribonuclease P protein component 3">
    <location>
        <begin position="1"/>
        <end position="232"/>
    </location>
</feature>
<sequence length="232" mass="24884">MYEAVCAHPDGDSTVARLAATAASAGYDGIVVRNWGATSADPDAVGADTDADVVRGTTVSVTDRAGASERIRRRRENAVVVAARASSPSLNRFVAESERVDVLAAPMADGGDVNHVIVKAARTHGVRLEFDFAGVLRASGGDRVQALRGLRKLRELVEHYDAPFVVSGRPASHLHVRSPRELVAVGAEIGFTDAQVRAGLREWTHLAARNRRRLSAEFIAPGVKRGRYEEDP</sequence>
<reference key="1">
    <citation type="journal article" date="2008" name="Genomics">
        <title>Evolution in the laboratory: the genome of Halobacterium salinarum strain R1 compared to that of strain NRC-1.</title>
        <authorList>
            <person name="Pfeiffer F."/>
            <person name="Schuster S.C."/>
            <person name="Broicher A."/>
            <person name="Falb M."/>
            <person name="Palm P."/>
            <person name="Rodewald K."/>
            <person name="Ruepp A."/>
            <person name="Soppa J."/>
            <person name="Tittor J."/>
            <person name="Oesterhelt D."/>
        </authorList>
    </citation>
    <scope>NUCLEOTIDE SEQUENCE [LARGE SCALE GENOMIC DNA]</scope>
    <source>
        <strain>ATCC 29341 / DSM 671 / R1</strain>
    </source>
</reference>
<dbReference type="EC" id="3.1.26.5" evidence="1"/>
<dbReference type="EMBL" id="AM774415">
    <property type="protein sequence ID" value="CAP13913.1"/>
    <property type="molecule type" value="Genomic_DNA"/>
</dbReference>
<dbReference type="RefSeq" id="WP_012289302.1">
    <property type="nucleotide sequence ID" value="NC_010364.1"/>
</dbReference>
<dbReference type="SMR" id="B0R596"/>
<dbReference type="EnsemblBacteria" id="CAP13913">
    <property type="protein sequence ID" value="CAP13913"/>
    <property type="gene ID" value="OE_2834R"/>
</dbReference>
<dbReference type="KEGG" id="hsl:OE_2834R"/>
<dbReference type="HOGENOM" id="CLU_074509_1_0_2"/>
<dbReference type="Proteomes" id="UP000001321">
    <property type="component" value="Chromosome"/>
</dbReference>
<dbReference type="GO" id="GO:0005737">
    <property type="term" value="C:cytoplasm"/>
    <property type="evidence" value="ECO:0007669"/>
    <property type="project" value="UniProtKB-SubCell"/>
</dbReference>
<dbReference type="GO" id="GO:0030677">
    <property type="term" value="C:ribonuclease P complex"/>
    <property type="evidence" value="ECO:0007669"/>
    <property type="project" value="UniProtKB-UniRule"/>
</dbReference>
<dbReference type="GO" id="GO:0004526">
    <property type="term" value="F:ribonuclease P activity"/>
    <property type="evidence" value="ECO:0007669"/>
    <property type="project" value="UniProtKB-UniRule"/>
</dbReference>
<dbReference type="GO" id="GO:0001682">
    <property type="term" value="P:tRNA 5'-leader removal"/>
    <property type="evidence" value="ECO:0007669"/>
    <property type="project" value="UniProtKB-UniRule"/>
</dbReference>
<dbReference type="Gene3D" id="3.20.20.140">
    <property type="entry name" value="Metal-dependent hydrolases"/>
    <property type="match status" value="1"/>
</dbReference>
<dbReference type="HAMAP" id="MF_00756">
    <property type="entry name" value="RNase_P_3"/>
    <property type="match status" value="1"/>
</dbReference>
<dbReference type="InterPro" id="IPR016195">
    <property type="entry name" value="Pol/histidinol_Pase-like"/>
</dbReference>
<dbReference type="InterPro" id="IPR023539">
    <property type="entry name" value="RNase_P_comp-3_arc"/>
</dbReference>
<dbReference type="InterPro" id="IPR002738">
    <property type="entry name" value="RNase_P_p30"/>
</dbReference>
<dbReference type="Pfam" id="PF01876">
    <property type="entry name" value="RNase_P_p30"/>
    <property type="match status" value="1"/>
</dbReference>
<dbReference type="SUPFAM" id="SSF89550">
    <property type="entry name" value="PHP domain-like"/>
    <property type="match status" value="1"/>
</dbReference>
<evidence type="ECO:0000255" key="1">
    <source>
        <dbReference type="HAMAP-Rule" id="MF_00756"/>
    </source>
</evidence>